<comment type="function">
    <text evidence="1">Involved in transcription antitermination. Required for transcription of ribosomal RNA (rRNA) genes. Binds specifically to the boxA antiterminator sequence of the ribosomal RNA (rrn) operons.</text>
</comment>
<comment type="similarity">
    <text evidence="1">Belongs to the NusB family.</text>
</comment>
<accession>A4FBF8</accession>
<gene>
    <name evidence="1" type="primary">nusB</name>
    <name type="ordered locus">SACE_2076</name>
</gene>
<protein>
    <recommendedName>
        <fullName evidence="1">Transcription antitermination protein NusB</fullName>
    </recommendedName>
    <alternativeName>
        <fullName evidence="1">Antitermination factor NusB</fullName>
    </alternativeName>
</protein>
<evidence type="ECO:0000255" key="1">
    <source>
        <dbReference type="HAMAP-Rule" id="MF_00073"/>
    </source>
</evidence>
<name>NUSB_SACEN</name>
<keyword id="KW-1185">Reference proteome</keyword>
<keyword id="KW-0694">RNA-binding</keyword>
<keyword id="KW-0804">Transcription</keyword>
<keyword id="KW-0889">Transcription antitermination</keyword>
<keyword id="KW-0805">Transcription regulation</keyword>
<organism>
    <name type="scientific">Saccharopolyspora erythraea (strain ATCC 11635 / DSM 40517 / JCM 4748 / NBRC 13426 / NCIMB 8594 / NRRL 2338)</name>
    <dbReference type="NCBI Taxonomy" id="405948"/>
    <lineage>
        <taxon>Bacteria</taxon>
        <taxon>Bacillati</taxon>
        <taxon>Actinomycetota</taxon>
        <taxon>Actinomycetes</taxon>
        <taxon>Pseudonocardiales</taxon>
        <taxon>Pseudonocardiaceae</taxon>
        <taxon>Saccharopolyspora</taxon>
    </lineage>
</organism>
<reference key="1">
    <citation type="journal article" date="2007" name="Nat. Biotechnol.">
        <title>Complete genome sequence of the erythromycin-producing bacterium Saccharopolyspora erythraea NRRL23338.</title>
        <authorList>
            <person name="Oliynyk M."/>
            <person name="Samborskyy M."/>
            <person name="Lester J.B."/>
            <person name="Mironenko T."/>
            <person name="Scott N."/>
            <person name="Dickens S."/>
            <person name="Haydock S.F."/>
            <person name="Leadlay P.F."/>
        </authorList>
    </citation>
    <scope>NUCLEOTIDE SEQUENCE [LARGE SCALE GENOMIC DNA]</scope>
    <source>
        <strain>ATCC 11635 / DSM 40517 / JCM 4748 / NBRC 13426 / NCIMB 8594 / NRRL 2338</strain>
    </source>
</reference>
<feature type="chain" id="PRO_1000057500" description="Transcription antitermination protein NusB">
    <location>
        <begin position="1"/>
        <end position="148"/>
    </location>
</feature>
<sequence length="148" mass="16055">MGARNKARKRAVDVLYEADLRGEDAVTLLSGRVGSPDLPPVNEYTVTLVEGVTANRQRIDELLVEHAEGWTLARMPAVDRAVLRLGLYELLWRSDDVPPAVAIDEAVELVKALSTDDSPRFVNGVLGRIAGIGDRLRSTLRGANPGAE</sequence>
<proteinExistence type="inferred from homology"/>
<dbReference type="EMBL" id="AM420293">
    <property type="protein sequence ID" value="CAM01383.1"/>
    <property type="molecule type" value="Genomic_DNA"/>
</dbReference>
<dbReference type="RefSeq" id="WP_009943044.1">
    <property type="nucleotide sequence ID" value="NC_009142.1"/>
</dbReference>
<dbReference type="SMR" id="A4FBF8"/>
<dbReference type="STRING" id="405948.SACE_2076"/>
<dbReference type="KEGG" id="sen:SACE_2076"/>
<dbReference type="eggNOG" id="COG0781">
    <property type="taxonomic scope" value="Bacteria"/>
</dbReference>
<dbReference type="HOGENOM" id="CLU_087843_2_3_11"/>
<dbReference type="OrthoDB" id="3528057at2"/>
<dbReference type="Proteomes" id="UP000006728">
    <property type="component" value="Chromosome"/>
</dbReference>
<dbReference type="GO" id="GO:0005829">
    <property type="term" value="C:cytosol"/>
    <property type="evidence" value="ECO:0007669"/>
    <property type="project" value="TreeGrafter"/>
</dbReference>
<dbReference type="GO" id="GO:0003723">
    <property type="term" value="F:RNA binding"/>
    <property type="evidence" value="ECO:0007669"/>
    <property type="project" value="UniProtKB-UniRule"/>
</dbReference>
<dbReference type="GO" id="GO:0006353">
    <property type="term" value="P:DNA-templated transcription termination"/>
    <property type="evidence" value="ECO:0007669"/>
    <property type="project" value="UniProtKB-UniRule"/>
</dbReference>
<dbReference type="GO" id="GO:0031564">
    <property type="term" value="P:transcription antitermination"/>
    <property type="evidence" value="ECO:0007669"/>
    <property type="project" value="UniProtKB-KW"/>
</dbReference>
<dbReference type="CDD" id="cd00619">
    <property type="entry name" value="Terminator_NusB"/>
    <property type="match status" value="1"/>
</dbReference>
<dbReference type="Gene3D" id="1.10.940.10">
    <property type="entry name" value="NusB-like"/>
    <property type="match status" value="1"/>
</dbReference>
<dbReference type="HAMAP" id="MF_00073">
    <property type="entry name" value="NusB"/>
    <property type="match status" value="1"/>
</dbReference>
<dbReference type="InterPro" id="IPR035926">
    <property type="entry name" value="NusB-like_sf"/>
</dbReference>
<dbReference type="InterPro" id="IPR011605">
    <property type="entry name" value="NusB_fam"/>
</dbReference>
<dbReference type="InterPro" id="IPR006027">
    <property type="entry name" value="NusB_RsmB_TIM44"/>
</dbReference>
<dbReference type="NCBIfam" id="TIGR01951">
    <property type="entry name" value="nusB"/>
    <property type="match status" value="1"/>
</dbReference>
<dbReference type="PANTHER" id="PTHR11078:SF3">
    <property type="entry name" value="ANTITERMINATION NUSB DOMAIN-CONTAINING PROTEIN"/>
    <property type="match status" value="1"/>
</dbReference>
<dbReference type="PANTHER" id="PTHR11078">
    <property type="entry name" value="N UTILIZATION SUBSTANCE PROTEIN B-RELATED"/>
    <property type="match status" value="1"/>
</dbReference>
<dbReference type="Pfam" id="PF01029">
    <property type="entry name" value="NusB"/>
    <property type="match status" value="1"/>
</dbReference>
<dbReference type="SUPFAM" id="SSF48013">
    <property type="entry name" value="NusB-like"/>
    <property type="match status" value="1"/>
</dbReference>